<reference key="1">
    <citation type="journal article" date="1999" name="Science">
        <title>Genome sequence of the radioresistant bacterium Deinococcus radiodurans R1.</title>
        <authorList>
            <person name="White O."/>
            <person name="Eisen J.A."/>
            <person name="Heidelberg J.F."/>
            <person name="Hickey E.K."/>
            <person name="Peterson J.D."/>
            <person name="Dodson R.J."/>
            <person name="Haft D.H."/>
            <person name="Gwinn M.L."/>
            <person name="Nelson W.C."/>
            <person name="Richardson D.L."/>
            <person name="Moffat K.S."/>
            <person name="Qin H."/>
            <person name="Jiang L."/>
            <person name="Pamphile W."/>
            <person name="Crosby M."/>
            <person name="Shen M."/>
            <person name="Vamathevan J.J."/>
            <person name="Lam P."/>
            <person name="McDonald L.A."/>
            <person name="Utterback T.R."/>
            <person name="Zalewski C."/>
            <person name="Makarova K.S."/>
            <person name="Aravind L."/>
            <person name="Daly M.J."/>
            <person name="Minton K.W."/>
            <person name="Fleischmann R.D."/>
            <person name="Ketchum K.A."/>
            <person name="Nelson K.E."/>
            <person name="Salzberg S.L."/>
            <person name="Smith H.O."/>
            <person name="Venter J.C."/>
            <person name="Fraser C.M."/>
        </authorList>
    </citation>
    <scope>NUCLEOTIDE SEQUENCE [LARGE SCALE GENOMIC DNA]</scope>
    <source>
        <strain>ATCC 13939 / DSM 20539 / JCM 16871 / CCUG 27074 / LMG 4051 / NBRC 15346 / NCIMB 9279 / VKM B-1422 / R1</strain>
    </source>
</reference>
<reference key="2">
    <citation type="journal article" date="2002" name="J. Biol. Chem.">
        <title>Closely related CC- and A-adding enzymes collaborate to construct and repair the 3'-terminal CCA of tRNA in Synechocystis sp. and Deinococcus radiodurans.</title>
        <authorList>
            <person name="Tomita K."/>
            <person name="Weiner A.M."/>
        </authorList>
    </citation>
    <scope>FUNCTION</scope>
    <scope>CATALYTIC ACTIVITY</scope>
</reference>
<feature type="chain" id="PRO_0000447565" description="A-adding tRNA nucleotidyltransferase">
    <location>
        <begin position="1"/>
        <end position="434"/>
    </location>
</feature>
<feature type="domain" description="HD" evidence="2">
    <location>
        <begin position="227"/>
        <end position="339"/>
    </location>
</feature>
<feature type="binding site" evidence="1">
    <location>
        <begin position="20"/>
        <end position="23"/>
    </location>
    <ligand>
        <name>ATP</name>
        <dbReference type="ChEBI" id="CHEBI:30616"/>
    </ligand>
</feature>
<feature type="binding site" evidence="1">
    <location>
        <position position="33"/>
    </location>
    <ligand>
        <name>Mg(2+)</name>
        <dbReference type="ChEBI" id="CHEBI:18420"/>
    </ligand>
</feature>
<feature type="binding site" evidence="1">
    <location>
        <position position="35"/>
    </location>
    <ligand>
        <name>Mg(2+)</name>
        <dbReference type="ChEBI" id="CHEBI:18420"/>
    </ligand>
</feature>
<feature type="binding site" evidence="1">
    <location>
        <begin position="91"/>
        <end position="92"/>
    </location>
    <ligand>
        <name>ATP</name>
        <dbReference type="ChEBI" id="CHEBI:30616"/>
    </ligand>
</feature>
<feature type="binding site" evidence="1">
    <location>
        <position position="96"/>
    </location>
    <ligand>
        <name>ATP</name>
        <dbReference type="ChEBI" id="CHEBI:30616"/>
    </ligand>
</feature>
<feature type="binding site" evidence="1">
    <location>
        <begin position="132"/>
        <end position="141"/>
    </location>
    <ligand>
        <name>ATP</name>
        <dbReference type="ChEBI" id="CHEBI:30616"/>
    </ligand>
</feature>
<feature type="binding site" evidence="1">
    <location>
        <position position="177"/>
    </location>
    <ligand>
        <name>ATP</name>
        <dbReference type="ChEBI" id="CHEBI:30616"/>
    </ligand>
</feature>
<comment type="function">
    <text evidence="3">tRNA nucleotidyltransferase involved in the synthesis of the tRNA CCA terminus. Adds the terminal adenosine residue to tRNA.</text>
</comment>
<comment type="catalytic activity">
    <reaction evidence="3">
        <text>a tRNA with a 3' CC end + ATP = a tRNA with a 3' CCA end + diphosphate</text>
        <dbReference type="Rhea" id="RHEA:60012"/>
        <dbReference type="Rhea" id="RHEA-COMP:10468"/>
        <dbReference type="Rhea" id="RHEA-COMP:15488"/>
        <dbReference type="ChEBI" id="CHEBI:30616"/>
        <dbReference type="ChEBI" id="CHEBI:33019"/>
        <dbReference type="ChEBI" id="CHEBI:83069"/>
        <dbReference type="ChEBI" id="CHEBI:83071"/>
    </reaction>
    <physiologicalReaction direction="left-to-right" evidence="3">
        <dbReference type="Rhea" id="RHEA:60013"/>
    </physiologicalReaction>
</comment>
<comment type="cofactor">
    <cofactor evidence="1">
        <name>Mg(2+)</name>
        <dbReference type="ChEBI" id="CHEBI:18420"/>
    </cofactor>
</comment>
<comment type="similarity">
    <text evidence="5">Belongs to the tRNA nucleotidyltransferase/poly(A) polymerase family.</text>
</comment>
<accession>Q9RV39</accession>
<gene>
    <name evidence="6" type="ordered locus">DR_1191</name>
</gene>
<name>AATNT_DEIRA</name>
<protein>
    <recommendedName>
        <fullName evidence="5">A-adding tRNA nucleotidyltransferase</fullName>
        <shortName evidence="5">A-adding TNT</shortName>
        <ecNumber evidence="3">2.7.7.-</ecNumber>
    </recommendedName>
    <alternativeName>
        <fullName evidence="4">A-adding enzyme</fullName>
    </alternativeName>
</protein>
<keyword id="KW-0067">ATP-binding</keyword>
<keyword id="KW-0460">Magnesium</keyword>
<keyword id="KW-0479">Metal-binding</keyword>
<keyword id="KW-0547">Nucleotide-binding</keyword>
<keyword id="KW-0548">Nucleotidyltransferase</keyword>
<keyword id="KW-1185">Reference proteome</keyword>
<keyword id="KW-0694">RNA-binding</keyword>
<keyword id="KW-0808">Transferase</keyword>
<keyword id="KW-0819">tRNA processing</keyword>
<keyword id="KW-0820">tRNA-binding</keyword>
<proteinExistence type="evidence at protein level"/>
<dbReference type="EC" id="2.7.7.-" evidence="3"/>
<dbReference type="EMBL" id="AE000513">
    <property type="protein sequence ID" value="AAF10763.1"/>
    <property type="molecule type" value="Genomic_DNA"/>
</dbReference>
<dbReference type="PIR" id="F75425">
    <property type="entry name" value="F75425"/>
</dbReference>
<dbReference type="RefSeq" id="NP_294915.1">
    <property type="nucleotide sequence ID" value="NC_001263.1"/>
</dbReference>
<dbReference type="RefSeq" id="WP_010887834.1">
    <property type="nucleotide sequence ID" value="NC_001263.1"/>
</dbReference>
<dbReference type="SMR" id="Q9RV39"/>
<dbReference type="STRING" id="243230.DR_1191"/>
<dbReference type="PaxDb" id="243230-DR_1191"/>
<dbReference type="EnsemblBacteria" id="AAF10763">
    <property type="protein sequence ID" value="AAF10763"/>
    <property type="gene ID" value="DR_1191"/>
</dbReference>
<dbReference type="GeneID" id="69517438"/>
<dbReference type="KEGG" id="dra:DR_1191"/>
<dbReference type="PATRIC" id="fig|243230.17.peg.1391"/>
<dbReference type="eggNOG" id="COG0617">
    <property type="taxonomic scope" value="Bacteria"/>
</dbReference>
<dbReference type="HOGENOM" id="CLU_015961_6_2_0"/>
<dbReference type="InParanoid" id="Q9RV39"/>
<dbReference type="OrthoDB" id="9805698at2"/>
<dbReference type="Proteomes" id="UP000002524">
    <property type="component" value="Chromosome 1"/>
</dbReference>
<dbReference type="GO" id="GO:0005524">
    <property type="term" value="F:ATP binding"/>
    <property type="evidence" value="ECO:0007669"/>
    <property type="project" value="UniProtKB-KW"/>
</dbReference>
<dbReference type="GO" id="GO:0052929">
    <property type="term" value="F:ATP:3'-cytidine-cytidine-tRNA adenylyltransferase activity"/>
    <property type="evidence" value="ECO:0007669"/>
    <property type="project" value="RHEA"/>
</dbReference>
<dbReference type="GO" id="GO:0160016">
    <property type="term" value="F:CCACCA tRNA nucleotidyltransferase activity"/>
    <property type="evidence" value="ECO:0000318"/>
    <property type="project" value="GO_Central"/>
</dbReference>
<dbReference type="GO" id="GO:0046872">
    <property type="term" value="F:metal ion binding"/>
    <property type="evidence" value="ECO:0007669"/>
    <property type="project" value="UniProtKB-KW"/>
</dbReference>
<dbReference type="GO" id="GO:0000049">
    <property type="term" value="F:tRNA binding"/>
    <property type="evidence" value="ECO:0007669"/>
    <property type="project" value="UniProtKB-KW"/>
</dbReference>
<dbReference type="GO" id="GO:0001680">
    <property type="term" value="P:tRNA 3'-terminal CCA addition"/>
    <property type="evidence" value="ECO:0000318"/>
    <property type="project" value="GO_Central"/>
</dbReference>
<dbReference type="GO" id="GO:0106354">
    <property type="term" value="P:tRNA surveillance"/>
    <property type="evidence" value="ECO:0000318"/>
    <property type="project" value="GO_Central"/>
</dbReference>
<dbReference type="CDD" id="cd00077">
    <property type="entry name" value="HDc"/>
    <property type="match status" value="1"/>
</dbReference>
<dbReference type="Gene3D" id="3.30.460.10">
    <property type="entry name" value="Beta Polymerase, domain 2"/>
    <property type="match status" value="1"/>
</dbReference>
<dbReference type="Gene3D" id="1.10.3090.10">
    <property type="entry name" value="cca-adding enzyme, domain 2"/>
    <property type="match status" value="1"/>
</dbReference>
<dbReference type="InterPro" id="IPR003607">
    <property type="entry name" value="HD/PDEase_dom"/>
</dbReference>
<dbReference type="InterPro" id="IPR006674">
    <property type="entry name" value="HD_domain"/>
</dbReference>
<dbReference type="InterPro" id="IPR006675">
    <property type="entry name" value="HDIG_dom"/>
</dbReference>
<dbReference type="InterPro" id="IPR043519">
    <property type="entry name" value="NT_sf"/>
</dbReference>
<dbReference type="InterPro" id="IPR002646">
    <property type="entry name" value="PolA_pol_head_dom"/>
</dbReference>
<dbReference type="InterPro" id="IPR032828">
    <property type="entry name" value="PolyA_RNA-bd"/>
</dbReference>
<dbReference type="InterPro" id="IPR050124">
    <property type="entry name" value="tRNA_CCA-adding_enzyme"/>
</dbReference>
<dbReference type="NCBIfam" id="TIGR00277">
    <property type="entry name" value="HDIG"/>
    <property type="match status" value="1"/>
</dbReference>
<dbReference type="PANTHER" id="PTHR47545:SF2">
    <property type="entry name" value="CC-ADDING TRNA NUCLEOTIDYLTRANSFERASE"/>
    <property type="match status" value="1"/>
</dbReference>
<dbReference type="PANTHER" id="PTHR47545">
    <property type="entry name" value="MULTIFUNCTIONAL CCA PROTEIN"/>
    <property type="match status" value="1"/>
</dbReference>
<dbReference type="Pfam" id="PF01966">
    <property type="entry name" value="HD"/>
    <property type="match status" value="1"/>
</dbReference>
<dbReference type="Pfam" id="PF01743">
    <property type="entry name" value="PolyA_pol"/>
    <property type="match status" value="1"/>
</dbReference>
<dbReference type="Pfam" id="PF12627">
    <property type="entry name" value="PolyA_pol_RNAbd"/>
    <property type="match status" value="1"/>
</dbReference>
<dbReference type="SMART" id="SM00471">
    <property type="entry name" value="HDc"/>
    <property type="match status" value="1"/>
</dbReference>
<dbReference type="SUPFAM" id="SSF81301">
    <property type="entry name" value="Nucleotidyltransferase"/>
    <property type="match status" value="1"/>
</dbReference>
<dbReference type="SUPFAM" id="SSF81891">
    <property type="entry name" value="Poly A polymerase C-terminal region-like"/>
    <property type="match status" value="1"/>
</dbReference>
<dbReference type="PROSITE" id="PS51831">
    <property type="entry name" value="HD"/>
    <property type="match status" value="1"/>
</dbReference>
<evidence type="ECO:0000250" key="1">
    <source>
        <dbReference type="UniProtKB" id="O66728"/>
    </source>
</evidence>
<evidence type="ECO:0000255" key="2">
    <source>
        <dbReference type="PROSITE-ProRule" id="PRU01175"/>
    </source>
</evidence>
<evidence type="ECO:0000269" key="3">
    <source>
    </source>
</evidence>
<evidence type="ECO:0000303" key="4">
    <source>
    </source>
</evidence>
<evidence type="ECO:0000305" key="5"/>
<evidence type="ECO:0000312" key="6">
    <source>
        <dbReference type="EMBL" id="AAF10763.1"/>
    </source>
</evidence>
<sequence>MFRRRPPLPPFPPGAALVGGAVRDWLRGVRSADYDWAHPDPAAGARALAALVGGAAFPLDEERGYWRVTAGEVQHDFVPLPPNLEDDLRRRDFTVNAIALREGRRLVDPLGGQQDLKRRVLRMVSEDNLRADPLRAWRAARFVTTLSFTLEPQTEQAVRQVAADLKAGRLPFPAWERVRDELHALLRSPDAARGILTLEALGLLDLTLPELREGQGLTQGGFHHLDVFEHGVEALHQLLTRRPDADLLLRWATLLHDVGKPRTFARDPDTGRRSFHGHDRVGAELTTQILTRLKLPGADVKRAAALVKAHMVQLPADDAQARRFVHRRRELLPDLLSLMLADREAARGPSSSELGRFAYMLAMERVLAALEEQPAAPPPLLSGKEVMALLGLTPGPRVGEVLRALAEARALGEVGTPQEARAFVQRWAEETPGS</sequence>
<organism>
    <name type="scientific">Deinococcus radiodurans (strain ATCC 13939 / DSM 20539 / JCM 16871 / CCUG 27074 / LMG 4051 / NBRC 15346 / NCIMB 9279 / VKM B-1422 / R1)</name>
    <dbReference type="NCBI Taxonomy" id="243230"/>
    <lineage>
        <taxon>Bacteria</taxon>
        <taxon>Thermotogati</taxon>
        <taxon>Deinococcota</taxon>
        <taxon>Deinococci</taxon>
        <taxon>Deinococcales</taxon>
        <taxon>Deinococcaceae</taxon>
        <taxon>Deinococcus</taxon>
    </lineage>
</organism>